<evidence type="ECO:0000255" key="1">
    <source>
        <dbReference type="HAMAP-Rule" id="MF_00472"/>
    </source>
</evidence>
<reference key="1">
    <citation type="journal article" date="2011" name="J. Bacteriol.">
        <title>Comparative genomics of 28 Salmonella enterica isolates: evidence for CRISPR-mediated adaptive sublineage evolution.</title>
        <authorList>
            <person name="Fricke W.F."/>
            <person name="Mammel M.K."/>
            <person name="McDermott P.F."/>
            <person name="Tartera C."/>
            <person name="White D.G."/>
            <person name="Leclerc J.E."/>
            <person name="Ravel J."/>
            <person name="Cebula T.A."/>
        </authorList>
    </citation>
    <scope>NUCLEOTIDE SEQUENCE [LARGE SCALE GENOMIC DNA]</scope>
    <source>
        <strain>SL476</strain>
    </source>
</reference>
<feature type="chain" id="PRO_1000199699" description="Ubiquinone biosynthesis O-methyltransferase">
    <location>
        <begin position="1"/>
        <end position="242"/>
    </location>
</feature>
<feature type="binding site" evidence="1">
    <location>
        <position position="44"/>
    </location>
    <ligand>
        <name>S-adenosyl-L-methionine</name>
        <dbReference type="ChEBI" id="CHEBI:59789"/>
    </ligand>
</feature>
<feature type="binding site" evidence="1">
    <location>
        <position position="64"/>
    </location>
    <ligand>
        <name>S-adenosyl-L-methionine</name>
        <dbReference type="ChEBI" id="CHEBI:59789"/>
    </ligand>
</feature>
<feature type="binding site" evidence="1">
    <location>
        <position position="85"/>
    </location>
    <ligand>
        <name>S-adenosyl-L-methionine</name>
        <dbReference type="ChEBI" id="CHEBI:59789"/>
    </ligand>
</feature>
<feature type="binding site" evidence="1">
    <location>
        <position position="129"/>
    </location>
    <ligand>
        <name>S-adenosyl-L-methionine</name>
        <dbReference type="ChEBI" id="CHEBI:59789"/>
    </ligand>
</feature>
<gene>
    <name evidence="1" type="primary">ubiG</name>
    <name type="ordered locus">SeHA_C2516</name>
</gene>
<keyword id="KW-0489">Methyltransferase</keyword>
<keyword id="KW-0949">S-adenosyl-L-methionine</keyword>
<keyword id="KW-0808">Transferase</keyword>
<keyword id="KW-0831">Ubiquinone biosynthesis</keyword>
<name>UBIG_SALHS</name>
<proteinExistence type="inferred from homology"/>
<dbReference type="EC" id="2.1.1.222" evidence="1"/>
<dbReference type="EC" id="2.1.1.64" evidence="1"/>
<dbReference type="EMBL" id="CP001120">
    <property type="protein sequence ID" value="ACF66862.1"/>
    <property type="molecule type" value="Genomic_DNA"/>
</dbReference>
<dbReference type="RefSeq" id="WP_001091009.1">
    <property type="nucleotide sequence ID" value="NC_011083.1"/>
</dbReference>
<dbReference type="SMR" id="B4TBE3"/>
<dbReference type="KEGG" id="seh:SeHA_C2516"/>
<dbReference type="HOGENOM" id="CLU_042432_5_0_6"/>
<dbReference type="UniPathway" id="UPA00232"/>
<dbReference type="Proteomes" id="UP000001866">
    <property type="component" value="Chromosome"/>
</dbReference>
<dbReference type="GO" id="GO:0102208">
    <property type="term" value="F:2-polyprenyl-6-hydroxyphenol methylase activity"/>
    <property type="evidence" value="ECO:0007669"/>
    <property type="project" value="UniProtKB-EC"/>
</dbReference>
<dbReference type="GO" id="GO:0061542">
    <property type="term" value="F:3-demethylubiquinol 3-O-methyltransferase activity"/>
    <property type="evidence" value="ECO:0007669"/>
    <property type="project" value="UniProtKB-UniRule"/>
</dbReference>
<dbReference type="GO" id="GO:0010420">
    <property type="term" value="F:polyprenyldihydroxybenzoate methyltransferase activity"/>
    <property type="evidence" value="ECO:0007669"/>
    <property type="project" value="InterPro"/>
</dbReference>
<dbReference type="GO" id="GO:0032259">
    <property type="term" value="P:methylation"/>
    <property type="evidence" value="ECO:0007669"/>
    <property type="project" value="UniProtKB-KW"/>
</dbReference>
<dbReference type="CDD" id="cd02440">
    <property type="entry name" value="AdoMet_MTases"/>
    <property type="match status" value="1"/>
</dbReference>
<dbReference type="FunFam" id="3.40.50.150:FF:000028">
    <property type="entry name" value="Ubiquinone biosynthesis O-methyltransferase"/>
    <property type="match status" value="1"/>
</dbReference>
<dbReference type="Gene3D" id="3.40.50.150">
    <property type="entry name" value="Vaccinia Virus protein VP39"/>
    <property type="match status" value="1"/>
</dbReference>
<dbReference type="HAMAP" id="MF_00472">
    <property type="entry name" value="UbiG"/>
    <property type="match status" value="1"/>
</dbReference>
<dbReference type="InterPro" id="IPR029063">
    <property type="entry name" value="SAM-dependent_MTases_sf"/>
</dbReference>
<dbReference type="InterPro" id="IPR010233">
    <property type="entry name" value="UbiG_MeTrfase"/>
</dbReference>
<dbReference type="NCBIfam" id="TIGR01983">
    <property type="entry name" value="UbiG"/>
    <property type="match status" value="1"/>
</dbReference>
<dbReference type="PANTHER" id="PTHR43464">
    <property type="entry name" value="METHYLTRANSFERASE"/>
    <property type="match status" value="1"/>
</dbReference>
<dbReference type="PANTHER" id="PTHR43464:SF19">
    <property type="entry name" value="UBIQUINONE BIOSYNTHESIS O-METHYLTRANSFERASE, MITOCHONDRIAL"/>
    <property type="match status" value="1"/>
</dbReference>
<dbReference type="Pfam" id="PF13489">
    <property type="entry name" value="Methyltransf_23"/>
    <property type="match status" value="1"/>
</dbReference>
<dbReference type="SUPFAM" id="SSF53335">
    <property type="entry name" value="S-adenosyl-L-methionine-dependent methyltransferases"/>
    <property type="match status" value="1"/>
</dbReference>
<comment type="function">
    <text evidence="1">O-methyltransferase that catalyzes the 2 O-methylation steps in the ubiquinone biosynthetic pathway.</text>
</comment>
<comment type="catalytic activity">
    <reaction evidence="1">
        <text>a 3-demethylubiquinol + S-adenosyl-L-methionine = a ubiquinol + S-adenosyl-L-homocysteine + H(+)</text>
        <dbReference type="Rhea" id="RHEA:44380"/>
        <dbReference type="Rhea" id="RHEA-COMP:9566"/>
        <dbReference type="Rhea" id="RHEA-COMP:10914"/>
        <dbReference type="ChEBI" id="CHEBI:15378"/>
        <dbReference type="ChEBI" id="CHEBI:17976"/>
        <dbReference type="ChEBI" id="CHEBI:57856"/>
        <dbReference type="ChEBI" id="CHEBI:59789"/>
        <dbReference type="ChEBI" id="CHEBI:84422"/>
        <dbReference type="EC" id="2.1.1.64"/>
    </reaction>
</comment>
<comment type="catalytic activity">
    <reaction evidence="1">
        <text>a 3-(all-trans-polyprenyl)benzene-1,2-diol + S-adenosyl-L-methionine = a 2-methoxy-6-(all-trans-polyprenyl)phenol + S-adenosyl-L-homocysteine + H(+)</text>
        <dbReference type="Rhea" id="RHEA:31411"/>
        <dbReference type="Rhea" id="RHEA-COMP:9550"/>
        <dbReference type="Rhea" id="RHEA-COMP:9551"/>
        <dbReference type="ChEBI" id="CHEBI:15378"/>
        <dbReference type="ChEBI" id="CHEBI:57856"/>
        <dbReference type="ChEBI" id="CHEBI:59789"/>
        <dbReference type="ChEBI" id="CHEBI:62729"/>
        <dbReference type="ChEBI" id="CHEBI:62731"/>
        <dbReference type="EC" id="2.1.1.222"/>
    </reaction>
</comment>
<comment type="pathway">
    <text evidence="1">Cofactor biosynthesis; ubiquinone biosynthesis.</text>
</comment>
<comment type="similarity">
    <text evidence="1">Belongs to the methyltransferase superfamily. UbiG/COQ3 family.</text>
</comment>
<accession>B4TBE3</accession>
<organism>
    <name type="scientific">Salmonella heidelberg (strain SL476)</name>
    <dbReference type="NCBI Taxonomy" id="454169"/>
    <lineage>
        <taxon>Bacteria</taxon>
        <taxon>Pseudomonadati</taxon>
        <taxon>Pseudomonadota</taxon>
        <taxon>Gammaproteobacteria</taxon>
        <taxon>Enterobacterales</taxon>
        <taxon>Enterobacteriaceae</taxon>
        <taxon>Salmonella</taxon>
    </lineage>
</organism>
<protein>
    <recommendedName>
        <fullName evidence="1">Ubiquinone biosynthesis O-methyltransferase</fullName>
    </recommendedName>
    <alternativeName>
        <fullName evidence="1">2-polyprenyl-6-hydroxyphenol methylase</fullName>
        <ecNumber evidence="1">2.1.1.222</ecNumber>
    </alternativeName>
    <alternativeName>
        <fullName evidence="1">3-demethylubiquinone 3-O-methyltransferase</fullName>
        <ecNumber evidence="1">2.1.1.64</ecNumber>
    </alternativeName>
</protein>
<sequence>MNTEKPSVAHNVDHNEIAKFEAVASRWWDLEGEFKPLHRINPLRLGYITERSGGLFGKKVLDVGCGGGILAESMAREGATVTGLDMGFEPLQVAKLHALESGIEVEYVQETVEEHAAKHAQQYDVVTCMEMLEHVPDPQSVVHACAQLVKPGGEVFFSTLNRNGKSWLMAVVGAEYILRMVPKGTHDVKKFIKPAELLSWVDETVLKEQHITGLHYNPITNTFKLGPGVDVNYMLHTRAKKA</sequence>